<protein>
    <recommendedName>
        <fullName>Autophagy-related protein 2</fullName>
    </recommendedName>
</protein>
<feature type="chain" id="PRO_0000215826" description="Autophagy-related protein 2">
    <location>
        <begin position="1"/>
        <end position="2160"/>
    </location>
</feature>
<feature type="region of interest" description="Disordered" evidence="3">
    <location>
        <begin position="100"/>
        <end position="130"/>
    </location>
</feature>
<feature type="region of interest" description="Disordered" evidence="3">
    <location>
        <begin position="142"/>
        <end position="174"/>
    </location>
</feature>
<feature type="region of interest" description="Disordered" evidence="3">
    <location>
        <begin position="288"/>
        <end position="317"/>
    </location>
</feature>
<feature type="region of interest" description="Disordered" evidence="3">
    <location>
        <begin position="347"/>
        <end position="371"/>
    </location>
</feature>
<feature type="region of interest" description="Disordered" evidence="3">
    <location>
        <begin position="401"/>
        <end position="519"/>
    </location>
</feature>
<feature type="region of interest" description="Disordered" evidence="3">
    <location>
        <begin position="657"/>
        <end position="689"/>
    </location>
</feature>
<feature type="region of interest" description="Disordered" evidence="3">
    <location>
        <begin position="715"/>
        <end position="739"/>
    </location>
</feature>
<feature type="region of interest" description="Disordered" evidence="3">
    <location>
        <begin position="953"/>
        <end position="978"/>
    </location>
</feature>
<feature type="compositionally biased region" description="Polar residues" evidence="3">
    <location>
        <begin position="100"/>
        <end position="116"/>
    </location>
</feature>
<feature type="compositionally biased region" description="Polar residues" evidence="3">
    <location>
        <begin position="153"/>
        <end position="168"/>
    </location>
</feature>
<feature type="compositionally biased region" description="Polar residues" evidence="3">
    <location>
        <begin position="292"/>
        <end position="306"/>
    </location>
</feature>
<feature type="compositionally biased region" description="Acidic residues" evidence="3">
    <location>
        <begin position="404"/>
        <end position="414"/>
    </location>
</feature>
<feature type="compositionally biased region" description="Low complexity" evidence="3">
    <location>
        <begin position="415"/>
        <end position="425"/>
    </location>
</feature>
<feature type="compositionally biased region" description="Polar residues" evidence="3">
    <location>
        <begin position="439"/>
        <end position="451"/>
    </location>
</feature>
<feature type="compositionally biased region" description="Low complexity" evidence="3">
    <location>
        <begin position="483"/>
        <end position="497"/>
    </location>
</feature>
<feature type="compositionally biased region" description="Polar residues" evidence="3">
    <location>
        <begin position="500"/>
        <end position="517"/>
    </location>
</feature>
<feature type="compositionally biased region" description="Basic and acidic residues" evidence="3">
    <location>
        <begin position="657"/>
        <end position="666"/>
    </location>
</feature>
<dbReference type="EMBL" id="AAHF01000006">
    <property type="protein sequence ID" value="EAL89159.1"/>
    <property type="molecule type" value="Genomic_DNA"/>
</dbReference>
<dbReference type="RefSeq" id="XP_751197.1">
    <property type="nucleotide sequence ID" value="XM_746104.1"/>
</dbReference>
<dbReference type="SMR" id="Q4WLK5"/>
<dbReference type="STRING" id="330879.Q4WLK5"/>
<dbReference type="EnsemblFungi" id="EAL89159">
    <property type="protein sequence ID" value="EAL89159"/>
    <property type="gene ID" value="AFUA_6G13200"/>
</dbReference>
<dbReference type="GeneID" id="3508504"/>
<dbReference type="KEGG" id="afm:AFUA_6G13200"/>
<dbReference type="eggNOG" id="KOG2993">
    <property type="taxonomic scope" value="Eukaryota"/>
</dbReference>
<dbReference type="HOGENOM" id="CLU_000626_1_0_1"/>
<dbReference type="InParanoid" id="Q4WLK5"/>
<dbReference type="OMA" id="AVWKRAP"/>
<dbReference type="OrthoDB" id="18982at2759"/>
<dbReference type="Proteomes" id="UP000002530">
    <property type="component" value="Chromosome 6"/>
</dbReference>
<dbReference type="GO" id="GO:0005789">
    <property type="term" value="C:endoplasmic reticulum membrane"/>
    <property type="evidence" value="ECO:0007669"/>
    <property type="project" value="UniProtKB-SubCell"/>
</dbReference>
<dbReference type="GO" id="GO:0061908">
    <property type="term" value="C:phagophore"/>
    <property type="evidence" value="ECO:0000318"/>
    <property type="project" value="GO_Central"/>
</dbReference>
<dbReference type="GO" id="GO:0000407">
    <property type="term" value="C:phagophore assembly site"/>
    <property type="evidence" value="ECO:0000318"/>
    <property type="project" value="GO_Central"/>
</dbReference>
<dbReference type="GO" id="GO:0034045">
    <property type="term" value="C:phagophore assembly site membrane"/>
    <property type="evidence" value="ECO:0007669"/>
    <property type="project" value="UniProtKB-SubCell"/>
</dbReference>
<dbReference type="GO" id="GO:0032266">
    <property type="term" value="F:phosphatidylinositol-3-phosphate binding"/>
    <property type="evidence" value="ECO:0000318"/>
    <property type="project" value="GO_Central"/>
</dbReference>
<dbReference type="GO" id="GO:0043495">
    <property type="term" value="F:protein-membrane adaptor activity"/>
    <property type="evidence" value="ECO:0000318"/>
    <property type="project" value="GO_Central"/>
</dbReference>
<dbReference type="GO" id="GO:0000045">
    <property type="term" value="P:autophagosome assembly"/>
    <property type="evidence" value="ECO:0000318"/>
    <property type="project" value="GO_Central"/>
</dbReference>
<dbReference type="GO" id="GO:0000422">
    <property type="term" value="P:autophagy of mitochondrion"/>
    <property type="evidence" value="ECO:0000318"/>
    <property type="project" value="GO_Central"/>
</dbReference>
<dbReference type="GO" id="GO:0061723">
    <property type="term" value="P:glycophagy"/>
    <property type="evidence" value="ECO:0000318"/>
    <property type="project" value="GO_Central"/>
</dbReference>
<dbReference type="GO" id="GO:0006869">
    <property type="term" value="P:lipid transport"/>
    <property type="evidence" value="ECO:0007669"/>
    <property type="project" value="UniProtKB-KW"/>
</dbReference>
<dbReference type="GO" id="GO:0000425">
    <property type="term" value="P:pexophagy"/>
    <property type="evidence" value="ECO:0000318"/>
    <property type="project" value="GO_Central"/>
</dbReference>
<dbReference type="GO" id="GO:0034727">
    <property type="term" value="P:piecemeal microautophagy of the nucleus"/>
    <property type="evidence" value="ECO:0000318"/>
    <property type="project" value="GO_Central"/>
</dbReference>
<dbReference type="GO" id="GO:0015031">
    <property type="term" value="P:protein transport"/>
    <property type="evidence" value="ECO:0007669"/>
    <property type="project" value="UniProtKB-KW"/>
</dbReference>
<dbReference type="GO" id="GO:0061709">
    <property type="term" value="P:reticulophagy"/>
    <property type="evidence" value="ECO:0000318"/>
    <property type="project" value="GO_Central"/>
</dbReference>
<dbReference type="InterPro" id="IPR026849">
    <property type="entry name" value="ATG2"/>
</dbReference>
<dbReference type="PANTHER" id="PTHR13190">
    <property type="entry name" value="AUTOPHAGY-RELATED 2, ISOFORM A"/>
    <property type="match status" value="1"/>
</dbReference>
<dbReference type="PANTHER" id="PTHR13190:SF1">
    <property type="entry name" value="AUTOPHAGY-RELATED 2, ISOFORM A"/>
    <property type="match status" value="1"/>
</dbReference>
<dbReference type="Pfam" id="PF13329">
    <property type="entry name" value="ATG2_CAD"/>
    <property type="match status" value="1"/>
</dbReference>
<organism>
    <name type="scientific">Aspergillus fumigatus (strain ATCC MYA-4609 / CBS 101355 / FGSC A1100 / Af293)</name>
    <name type="common">Neosartorya fumigata</name>
    <dbReference type="NCBI Taxonomy" id="330879"/>
    <lineage>
        <taxon>Eukaryota</taxon>
        <taxon>Fungi</taxon>
        <taxon>Dikarya</taxon>
        <taxon>Ascomycota</taxon>
        <taxon>Pezizomycotina</taxon>
        <taxon>Eurotiomycetes</taxon>
        <taxon>Eurotiomycetidae</taxon>
        <taxon>Eurotiales</taxon>
        <taxon>Aspergillaceae</taxon>
        <taxon>Aspergillus</taxon>
        <taxon>Aspergillus subgen. Fumigati</taxon>
    </lineage>
</organism>
<name>ATG2_ASPFU</name>
<comment type="function">
    <text evidence="2">Lipid transfer protein required for autophagosome completion and peroxisome degradation. Tethers the edge of the isolation membrane (IM) to the endoplasmic reticulum (ER) and mediates direct lipid transfer from ER to IM for IM expansion. Atg2 binds to the ER exit site (ERES), which is the membrane source for autophagosome formation, using basic residues in its N-terminal region (NR) and to the expanding edge of the IM through its C-terminal region. The latter binding is assisted by an atg18-PtdIns3P interaction. Atg2 then extracts phospholipids from the membrane source using its NR and transfers them to atg9 to the IM through its predicted beta-sheet-rich structure for membrane expansion.</text>
</comment>
<comment type="catalytic activity">
    <reaction evidence="1">
        <text>a 1,2-diacyl-sn-glycero-3-phosphocholine(in) = a 1,2-diacyl-sn-glycero-3-phosphocholine(out)</text>
        <dbReference type="Rhea" id="RHEA:38571"/>
        <dbReference type="ChEBI" id="CHEBI:57643"/>
    </reaction>
</comment>
<comment type="catalytic activity">
    <reaction evidence="1">
        <text>a 1,2-diacyl-sn-glycero-3-phospho-L-serine(in) = a 1,2-diacyl-sn-glycero-3-phospho-L-serine(out)</text>
        <dbReference type="Rhea" id="RHEA:38663"/>
        <dbReference type="ChEBI" id="CHEBI:57262"/>
    </reaction>
</comment>
<comment type="catalytic activity">
    <reaction evidence="1">
        <text>a 1,2-diacyl-sn-glycero-3-phosphoethanolamine(in) = a 1,2-diacyl-sn-glycero-3-phosphoethanolamine(out)</text>
        <dbReference type="Rhea" id="RHEA:38895"/>
        <dbReference type="ChEBI" id="CHEBI:64612"/>
    </reaction>
</comment>
<comment type="subcellular location">
    <subcellularLocation>
        <location evidence="2">Preautophagosomal structure membrane</location>
        <topology evidence="2">Peripheral membrane protein</topology>
    </subcellularLocation>
    <subcellularLocation>
        <location evidence="2">Endoplasmic reticulum membrane</location>
        <topology evidence="2">Peripheral membrane protein</topology>
    </subcellularLocation>
</comment>
<comment type="similarity">
    <text evidence="4">Belongs to the ATG2 family.</text>
</comment>
<gene>
    <name type="primary">atg2</name>
    <name type="ORF">AFUA_6G13200</name>
</gene>
<sequence length="2160" mass="235491">MAYFLPSFFQKRLLRYALSRLELVDTEALDLDSLGIRWGQRSTVELRDIGLRLELPASSELLSAKVQFLKITVPADIYSSGIICEASGINVHLQLPSEESFSTAKDGNPNSRSPSKAGTHDSSSDHILPTPADLAESFLDAEPKEEKEELQAAITSRSQMLQRTSASISDDEEELGLGNEGVSLPSFVAAFLKGVAERLQVRVDNVSIRVDMEMKQEGVVKREPENKPDNVTGLLTVREVSVGAVSSATSSSEQEKLFRNRPIVISDINMALISEPIVFSNYSRFAPPASPTTPVQPKSSEPSSRIPSPLPGHTPDADSFLAMTRSTILETQQEHWIQDIEEPGVGRMEGSAYTYDGRFSDADTDAEDRSDGYLEGAQQFLDNDKLLDNPAYLDSVIDSQLHDDDLEPPEDLVPQDDQFPPSSATPRPPKPEVHMYRETSPSGIDTEQTAPFSHYGDGFFMDRSPHGSQPYLGPDHVATRNASHSASSPSGSLPSREISNRQTAPPSESGSIGSSDFANGGELSESKLFSTEEAQSMYMSAISHGSSRSFVPNVPGAWDLWESTVAQDMHAGTQLTDAADAKQDVQDETSISTPKLTAQAASAFTEKRSFGEQSECLSEAREPDLAPLSPTLSKLSDVAKRFLRIDRISISIPVGEDRRHTDETVHSSDLNLASDSPKDSTVHSGHSSAESEFLSSTMYASARLRSDSINLAPSFEGTLPRSLPRQGKKADHDPISKSQPGDIAVEISAVDIRFDNAVGWLVVKIGQRVLHAFRDGGNVSSGKPAPESVQTRHSLALTLHDFSIKYVDHIPGQTYALNDYDPHSSSFFGLPHEDIILRAEASGLTARYLADKSATKFSLDVSKFVFGFAWDDLISFSESLKMRESTRDVLAPVNGDISLSLTKSSDSASLTITTLPLRLHLNVQRLEEIFGRVGGLSTILELGSSISSASTGFSTAKNMQRDSPRRARGVHFESSPPPENILPANPQLSWKVNARVGGIVFDVVGETHYLRLKTTAVKVVSRFEGIGVQIDKAKLSGPLPLDDSRDAPAKINLSNIRVEFLYSPKEPDLDRLLAIITPSKDKYDEDDDIMLDTLFRQRRQGSVLRTTVADAKIIISRTSDLESLSQLEEELGKLSTVAKYLPEDDRPGILTLTLIRELECQVYLGGPVGNITTHLRNAEAAYISMPSLIAAQLGTIKVVRNGSEELVGEALPASGSQGQNQSQLPILMARYIADEMDPTIKIKSHNLRVEYTIPSIIAFLGLSEDQTTGDVAANMANSLANIAESQHLHRNASETSIGSKGRQASAKPRKLAFALRDCVLALNPRCTTAKGLVVLTNAKFSAAISDSGCSEAMLDLKKASIMVIDDVKNMGLAENLQRGRSTIPQSDQIQSFIDMGFVPVSSISSAMATVKLLQLDDDGTKSVDVELKDDLLILETCADSTQTLISIINGLQPPTPPSVAVKYRTEVLPIEDMLASFSGDAFAMDPPPGQAEITEAPTIVEPEDGGPRIEDELEYVSDFYPVKSGPDNLAPTGSAVPSESNELLDSFHSQYYVSSSVSDLEFKEDHFANHSAVGGTAHRWDSTQNTYGLTDDSKIRKSPLRIRVRDAHIIWNLFDGYDWQRTRDTISKAVKDVEKRATERRARAGSRASPGFEEEEESVIGDCLFNSIYIGIPANKDPRELRNDINRNIDDLVSETGSYATTTTVTGATARQAQSPSYRGRRLKLSRSKYHKMTFELKGICADFVVFPPGSEETQSSLDVRVNDLEIFDHVPTSTWKKFATYMHEAGERESGASMVHLEMLTVRPVPELAASELVLKATLLPLRLHVDQDALDFICRFFEFRDDTAPTPSSPADIPFLQRVEVNAVPVKLDFKPKRVDYAGLRSGRTTEFMNFFVLDGADMVMRHVIIYGVSGFDKLGQTLNDIWMPDIKRNQLPGVLAGLAPIRSLVNVGGGVKDLVVVPMREYRKDGRIVRSIQKGALAFAKTTSNELVKLGAKLAIGTQTVLQGAEEMLTAPTATTLGSEEDMIDEEEANKISPYADQPVGVVQGLRGAFRGLERDLLLARDAIVAVPGEIVESGSAKAAAKAVLKRAPTVILRPAIGVSKAVGQTLLGAGNTLDPSNRRKIEDVSVMVKYVSRVCLLTSLLRNINAIKTVGHIGQL</sequence>
<keyword id="KW-0072">Autophagy</keyword>
<keyword id="KW-0256">Endoplasmic reticulum</keyword>
<keyword id="KW-0445">Lipid transport</keyword>
<keyword id="KW-0472">Membrane</keyword>
<keyword id="KW-0653">Protein transport</keyword>
<keyword id="KW-1185">Reference proteome</keyword>
<keyword id="KW-0813">Transport</keyword>
<reference key="1">
    <citation type="journal article" date="2005" name="Nature">
        <title>Genomic sequence of the pathogenic and allergenic filamentous fungus Aspergillus fumigatus.</title>
        <authorList>
            <person name="Nierman W.C."/>
            <person name="Pain A."/>
            <person name="Anderson M.J."/>
            <person name="Wortman J.R."/>
            <person name="Kim H.S."/>
            <person name="Arroyo J."/>
            <person name="Berriman M."/>
            <person name="Abe K."/>
            <person name="Archer D.B."/>
            <person name="Bermejo C."/>
            <person name="Bennett J.W."/>
            <person name="Bowyer P."/>
            <person name="Chen D."/>
            <person name="Collins M."/>
            <person name="Coulsen R."/>
            <person name="Davies R."/>
            <person name="Dyer P.S."/>
            <person name="Farman M.L."/>
            <person name="Fedorova N."/>
            <person name="Fedorova N.D."/>
            <person name="Feldblyum T.V."/>
            <person name="Fischer R."/>
            <person name="Fosker N."/>
            <person name="Fraser A."/>
            <person name="Garcia J.L."/>
            <person name="Garcia M.J."/>
            <person name="Goble A."/>
            <person name="Goldman G.H."/>
            <person name="Gomi K."/>
            <person name="Griffith-Jones S."/>
            <person name="Gwilliam R."/>
            <person name="Haas B.J."/>
            <person name="Haas H."/>
            <person name="Harris D.E."/>
            <person name="Horiuchi H."/>
            <person name="Huang J."/>
            <person name="Humphray S."/>
            <person name="Jimenez J."/>
            <person name="Keller N."/>
            <person name="Khouri H."/>
            <person name="Kitamoto K."/>
            <person name="Kobayashi T."/>
            <person name="Konzack S."/>
            <person name="Kulkarni R."/>
            <person name="Kumagai T."/>
            <person name="Lafton A."/>
            <person name="Latge J.-P."/>
            <person name="Li W."/>
            <person name="Lord A."/>
            <person name="Lu C."/>
            <person name="Majoros W.H."/>
            <person name="May G.S."/>
            <person name="Miller B.L."/>
            <person name="Mohamoud Y."/>
            <person name="Molina M."/>
            <person name="Monod M."/>
            <person name="Mouyna I."/>
            <person name="Mulligan S."/>
            <person name="Murphy L.D."/>
            <person name="O'Neil S."/>
            <person name="Paulsen I."/>
            <person name="Penalva M.A."/>
            <person name="Pertea M."/>
            <person name="Price C."/>
            <person name="Pritchard B.L."/>
            <person name="Quail M.A."/>
            <person name="Rabbinowitsch E."/>
            <person name="Rawlins N."/>
            <person name="Rajandream M.A."/>
            <person name="Reichard U."/>
            <person name="Renauld H."/>
            <person name="Robson G.D."/>
            <person name="Rodriguez de Cordoba S."/>
            <person name="Rodriguez-Pena J.M."/>
            <person name="Ronning C.M."/>
            <person name="Rutter S."/>
            <person name="Salzberg S.L."/>
            <person name="Sanchez M."/>
            <person name="Sanchez-Ferrero J.C."/>
            <person name="Saunders D."/>
            <person name="Seeger K."/>
            <person name="Squares R."/>
            <person name="Squares S."/>
            <person name="Takeuchi M."/>
            <person name="Tekaia F."/>
            <person name="Turner G."/>
            <person name="Vazquez de Aldana C.R."/>
            <person name="Weidman J."/>
            <person name="White O."/>
            <person name="Woodward J.R."/>
            <person name="Yu J.-H."/>
            <person name="Fraser C.M."/>
            <person name="Galagan J.E."/>
            <person name="Asai K."/>
            <person name="Machida M."/>
            <person name="Hall N."/>
            <person name="Barrell B.G."/>
            <person name="Denning D.W."/>
        </authorList>
    </citation>
    <scope>NUCLEOTIDE SEQUENCE [LARGE SCALE GENOMIC DNA]</scope>
    <source>
        <strain>ATCC MYA-4609 / CBS 101355 / FGSC A1100 / Af293</strain>
    </source>
</reference>
<accession>Q4WLK5</accession>
<evidence type="ECO:0000250" key="1">
    <source>
        <dbReference type="UniProtKB" id="O94649"/>
    </source>
</evidence>
<evidence type="ECO:0000250" key="2">
    <source>
        <dbReference type="UniProtKB" id="P53855"/>
    </source>
</evidence>
<evidence type="ECO:0000256" key="3">
    <source>
        <dbReference type="SAM" id="MobiDB-lite"/>
    </source>
</evidence>
<evidence type="ECO:0000305" key="4"/>
<proteinExistence type="inferred from homology"/>